<dbReference type="SMR" id="P35091"/>
<dbReference type="GO" id="GO:0019866">
    <property type="term" value="C:organelle inner membrane"/>
    <property type="evidence" value="ECO:0007669"/>
    <property type="project" value="InterPro"/>
</dbReference>
<dbReference type="GO" id="GO:0005886">
    <property type="term" value="C:plasma membrane"/>
    <property type="evidence" value="ECO:0007669"/>
    <property type="project" value="UniProtKB-SubCell"/>
</dbReference>
<dbReference type="GO" id="GO:0030077">
    <property type="term" value="C:plasma membrane light-harvesting complex"/>
    <property type="evidence" value="ECO:0007669"/>
    <property type="project" value="InterPro"/>
</dbReference>
<dbReference type="GO" id="GO:0042314">
    <property type="term" value="F:bacteriochlorophyll binding"/>
    <property type="evidence" value="ECO:0007669"/>
    <property type="project" value="UniProtKB-KW"/>
</dbReference>
<dbReference type="GO" id="GO:0045156">
    <property type="term" value="F:electron transporter, transferring electrons within the cyclic electron transport pathway of photosynthesis activity"/>
    <property type="evidence" value="ECO:0007669"/>
    <property type="project" value="InterPro"/>
</dbReference>
<dbReference type="GO" id="GO:0046872">
    <property type="term" value="F:metal ion binding"/>
    <property type="evidence" value="ECO:0007669"/>
    <property type="project" value="UniProtKB-KW"/>
</dbReference>
<dbReference type="GO" id="GO:0019684">
    <property type="term" value="P:photosynthesis, light reaction"/>
    <property type="evidence" value="ECO:0007669"/>
    <property type="project" value="InterPro"/>
</dbReference>
<dbReference type="Gene3D" id="4.10.220.20">
    <property type="entry name" value="Light-harvesting complex"/>
    <property type="match status" value="1"/>
</dbReference>
<dbReference type="InterPro" id="IPR000066">
    <property type="entry name" value="Antenna_a/b"/>
</dbReference>
<dbReference type="InterPro" id="IPR018332">
    <property type="entry name" value="Antenna_alpha"/>
</dbReference>
<dbReference type="InterPro" id="IPR002361">
    <property type="entry name" value="Antenna_alpha_CS"/>
</dbReference>
<dbReference type="InterPro" id="IPR035889">
    <property type="entry name" value="Light-harvesting_complex"/>
</dbReference>
<dbReference type="NCBIfam" id="NF040861">
    <property type="entry name" value="pufA_517_ASD"/>
    <property type="match status" value="1"/>
</dbReference>
<dbReference type="Pfam" id="PF00556">
    <property type="entry name" value="LHC"/>
    <property type="match status" value="1"/>
</dbReference>
<dbReference type="PRINTS" id="PR00673">
    <property type="entry name" value="LIGHTHARVSTA"/>
</dbReference>
<dbReference type="SUPFAM" id="SSF56918">
    <property type="entry name" value="Light-harvesting complex subunits"/>
    <property type="match status" value="1"/>
</dbReference>
<dbReference type="PROSITE" id="PS00968">
    <property type="entry name" value="ANTENNA_COMP_ALPHA"/>
    <property type="match status" value="1"/>
</dbReference>
<organism>
    <name type="scientific">Rhodoblastus acidophilus</name>
    <name type="common">Rhodopseudomonas acidophila</name>
    <dbReference type="NCBI Taxonomy" id="1074"/>
    <lineage>
        <taxon>Bacteria</taxon>
        <taxon>Pseudomonadati</taxon>
        <taxon>Pseudomonadota</taxon>
        <taxon>Alphaproteobacteria</taxon>
        <taxon>Hyphomicrobiales</taxon>
        <taxon>Rhodoblastaceae</taxon>
        <taxon>Rhodoblastus</taxon>
    </lineage>
</organism>
<evidence type="ECO:0000255" key="1"/>
<evidence type="ECO:0000305" key="2"/>
<sequence>MNQGKIWTVVNPSVGLPLLLGSVTVIAILVHAAVLSHTTWFPAYWQGGLKKAA</sequence>
<comment type="function">
    <text>Antenna complexes are light-harvesting systems, which transfer the excitation energy to the reaction centers.</text>
</comment>
<comment type="subunit">
    <text>The core complex is formed by different alpha and beta chains, binding bacteriochlorophyll molecules, and arranged most probably in tetrameric structures disposed around the reaction center. The non-pigmented gamma chains may constitute additional components.</text>
</comment>
<comment type="subcellular location">
    <subcellularLocation>
        <location>Cell inner membrane</location>
        <topology>Single-pass type II membrane protein</topology>
    </subcellularLocation>
</comment>
<comment type="similarity">
    <text evidence="2">Belongs to the antenna complex alpha subunit family.</text>
</comment>
<name>LHA3_RHOAC</name>
<accession>P35091</accession>
<protein>
    <recommendedName>
        <fullName>Light-harvesting protein B-800/850 alpha chain</fullName>
    </recommendedName>
    <alternativeName>
        <fullName>Antenna pigment protein alpha chain</fullName>
    </alternativeName>
</protein>
<keyword id="KW-0042">Antenna complex</keyword>
<keyword id="KW-0076">Bacteriochlorophyll</keyword>
<keyword id="KW-0997">Cell inner membrane</keyword>
<keyword id="KW-1003">Cell membrane</keyword>
<keyword id="KW-0148">Chlorophyll</keyword>
<keyword id="KW-0157">Chromophore</keyword>
<keyword id="KW-0903">Direct protein sequencing</keyword>
<keyword id="KW-0437">Light-harvesting polypeptide</keyword>
<keyword id="KW-0460">Magnesium</keyword>
<keyword id="KW-0472">Membrane</keyword>
<keyword id="KW-0479">Metal-binding</keyword>
<keyword id="KW-0812">Transmembrane</keyword>
<keyword id="KW-1133">Transmembrane helix</keyword>
<reference key="1">
    <citation type="book" date="1987" name="Progress in photosynthesis research">
        <editorList>
            <person name="Biggins J."/>
        </editorList>
        <authorList>
            <person name="Brunisholz R.A."/>
            <person name="Bissig I."/>
            <person name="Niederer E."/>
            <person name="Suter F."/>
            <person name="Zuber H."/>
        </authorList>
    </citation>
    <scope>PROTEIN SEQUENCE</scope>
    <source>
        <strain>ATCC 25092 / 7050 / DSM 137 / LMG 4304 / NCIB 11761</strain>
    </source>
</reference>
<feature type="chain" id="PRO_0000099786" description="Light-harvesting protein B-800/850 alpha chain">
    <location>
        <begin position="1"/>
        <end position="53"/>
    </location>
</feature>
<feature type="topological domain" description="Cytoplasmic" evidence="1">
    <location>
        <begin position="1"/>
        <end position="14"/>
    </location>
</feature>
<feature type="transmembrane region" description="Helical" evidence="1">
    <location>
        <begin position="15"/>
        <end position="35"/>
    </location>
</feature>
<feature type="topological domain" description="Periplasmic" evidence="1">
    <location>
        <begin position="36"/>
        <end position="53"/>
    </location>
</feature>
<feature type="binding site" description="axial binding residue" evidence="1">
    <location>
        <position position="31"/>
    </location>
    <ligand>
        <name>a bacteriochlorophyll</name>
        <dbReference type="ChEBI" id="CHEBI:38201"/>
    </ligand>
    <ligandPart>
        <name>Mg</name>
        <dbReference type="ChEBI" id="CHEBI:25107"/>
    </ligandPart>
</feature>
<proteinExistence type="evidence at protein level"/>